<reference key="1">
    <citation type="submission" date="2006-01" db="EMBL/GenBank/DDBJ databases">
        <title>Complete sequence of Novosphingobium aromaticivorans DSM 12444.</title>
        <authorList>
            <consortium name="US DOE Joint Genome Institute"/>
            <person name="Copeland A."/>
            <person name="Lucas S."/>
            <person name="Lapidus A."/>
            <person name="Barry K."/>
            <person name="Detter J.C."/>
            <person name="Glavina T."/>
            <person name="Hammon N."/>
            <person name="Israni S."/>
            <person name="Pitluck S."/>
            <person name="Chain P."/>
            <person name="Malfatti S."/>
            <person name="Shin M."/>
            <person name="Vergez L."/>
            <person name="Schmutz J."/>
            <person name="Larimer F."/>
            <person name="Land M."/>
            <person name="Kyrpides N."/>
            <person name="Ivanova N."/>
            <person name="Fredrickson J."/>
            <person name="Balkwill D."/>
            <person name="Romine M.F."/>
            <person name="Richardson P."/>
        </authorList>
    </citation>
    <scope>NUCLEOTIDE SEQUENCE [LARGE SCALE GENOMIC DNA]</scope>
    <source>
        <strain>ATCC 700278 / DSM 12444 / CCUG 56034 / CIP 105152 / NBRC 16084 / F199</strain>
    </source>
</reference>
<proteinExistence type="inferred from homology"/>
<name>RS20_NOVAD</name>
<dbReference type="EMBL" id="CP000248">
    <property type="protein sequence ID" value="ABD27773.1"/>
    <property type="molecule type" value="Genomic_DNA"/>
</dbReference>
<dbReference type="RefSeq" id="WP_011446975.1">
    <property type="nucleotide sequence ID" value="NC_007794.1"/>
</dbReference>
<dbReference type="SMR" id="Q2G300"/>
<dbReference type="STRING" id="279238.Saro_3338"/>
<dbReference type="KEGG" id="nar:Saro_3338"/>
<dbReference type="eggNOG" id="COG0268">
    <property type="taxonomic scope" value="Bacteria"/>
</dbReference>
<dbReference type="HOGENOM" id="CLU_160655_3_0_5"/>
<dbReference type="Proteomes" id="UP000009134">
    <property type="component" value="Chromosome"/>
</dbReference>
<dbReference type="GO" id="GO:0015935">
    <property type="term" value="C:small ribosomal subunit"/>
    <property type="evidence" value="ECO:0007669"/>
    <property type="project" value="TreeGrafter"/>
</dbReference>
<dbReference type="GO" id="GO:0070181">
    <property type="term" value="F:small ribosomal subunit rRNA binding"/>
    <property type="evidence" value="ECO:0007669"/>
    <property type="project" value="TreeGrafter"/>
</dbReference>
<dbReference type="GO" id="GO:0003735">
    <property type="term" value="F:structural constituent of ribosome"/>
    <property type="evidence" value="ECO:0007669"/>
    <property type="project" value="InterPro"/>
</dbReference>
<dbReference type="GO" id="GO:0006412">
    <property type="term" value="P:translation"/>
    <property type="evidence" value="ECO:0007669"/>
    <property type="project" value="UniProtKB-UniRule"/>
</dbReference>
<dbReference type="FunFam" id="1.20.58.110:FF:000001">
    <property type="entry name" value="30S ribosomal protein S20"/>
    <property type="match status" value="1"/>
</dbReference>
<dbReference type="Gene3D" id="1.20.58.110">
    <property type="entry name" value="Ribosomal protein S20"/>
    <property type="match status" value="1"/>
</dbReference>
<dbReference type="HAMAP" id="MF_00500">
    <property type="entry name" value="Ribosomal_bS20"/>
    <property type="match status" value="1"/>
</dbReference>
<dbReference type="InterPro" id="IPR002583">
    <property type="entry name" value="Ribosomal_bS20"/>
</dbReference>
<dbReference type="InterPro" id="IPR036510">
    <property type="entry name" value="Ribosomal_bS20_sf"/>
</dbReference>
<dbReference type="NCBIfam" id="TIGR00029">
    <property type="entry name" value="S20"/>
    <property type="match status" value="1"/>
</dbReference>
<dbReference type="PANTHER" id="PTHR33398">
    <property type="entry name" value="30S RIBOSOMAL PROTEIN S20"/>
    <property type="match status" value="1"/>
</dbReference>
<dbReference type="PANTHER" id="PTHR33398:SF1">
    <property type="entry name" value="SMALL RIBOSOMAL SUBUNIT PROTEIN BS20C"/>
    <property type="match status" value="1"/>
</dbReference>
<dbReference type="Pfam" id="PF01649">
    <property type="entry name" value="Ribosomal_S20p"/>
    <property type="match status" value="1"/>
</dbReference>
<dbReference type="SUPFAM" id="SSF46992">
    <property type="entry name" value="Ribosomal protein S20"/>
    <property type="match status" value="1"/>
</dbReference>
<organism>
    <name type="scientific">Novosphingobium aromaticivorans (strain ATCC 700278 / DSM 12444 / CCUG 56034 / CIP 105152 / NBRC 16084 / F199)</name>
    <dbReference type="NCBI Taxonomy" id="279238"/>
    <lineage>
        <taxon>Bacteria</taxon>
        <taxon>Pseudomonadati</taxon>
        <taxon>Pseudomonadota</taxon>
        <taxon>Alphaproteobacteria</taxon>
        <taxon>Sphingomonadales</taxon>
        <taxon>Sphingomonadaceae</taxon>
        <taxon>Novosphingobium</taxon>
    </lineage>
</organism>
<accession>Q2G300</accession>
<feature type="chain" id="PRO_0000236444" description="Small ribosomal subunit protein bS20">
    <location>
        <begin position="1"/>
        <end position="86"/>
    </location>
</feature>
<sequence>MANTPQARKRIRRNERRAEINGNRLSRIRTFVKKVETALAGGDKTAAAEALKAAQPELARGVARGVLHKNTVARKMSRLTKRVASL</sequence>
<evidence type="ECO:0000255" key="1">
    <source>
        <dbReference type="HAMAP-Rule" id="MF_00500"/>
    </source>
</evidence>
<evidence type="ECO:0000305" key="2"/>
<keyword id="KW-1185">Reference proteome</keyword>
<keyword id="KW-0687">Ribonucleoprotein</keyword>
<keyword id="KW-0689">Ribosomal protein</keyword>
<keyword id="KW-0694">RNA-binding</keyword>
<keyword id="KW-0699">rRNA-binding</keyword>
<protein>
    <recommendedName>
        <fullName evidence="1">Small ribosomal subunit protein bS20</fullName>
    </recommendedName>
    <alternativeName>
        <fullName evidence="2">30S ribosomal protein S20</fullName>
    </alternativeName>
</protein>
<gene>
    <name evidence="1" type="primary">rpsT</name>
    <name type="ordered locus">Saro_3338</name>
</gene>
<comment type="function">
    <text evidence="1">Binds directly to 16S ribosomal RNA.</text>
</comment>
<comment type="similarity">
    <text evidence="1">Belongs to the bacterial ribosomal protein bS20 family.</text>
</comment>